<keyword id="KW-0012">Acyltransferase</keyword>
<keyword id="KW-0963">Cytoplasm</keyword>
<keyword id="KW-0275">Fatty acid biosynthesis</keyword>
<keyword id="KW-0276">Fatty acid metabolism</keyword>
<keyword id="KW-0444">Lipid biosynthesis</keyword>
<keyword id="KW-0443">Lipid metabolism</keyword>
<keyword id="KW-0511">Multifunctional enzyme</keyword>
<keyword id="KW-0808">Transferase</keyword>
<feature type="chain" id="PRO_1000056406" description="Beta-ketoacyl-[acyl-carrier-protein] synthase III">
    <location>
        <begin position="1"/>
        <end position="317"/>
    </location>
</feature>
<feature type="region of interest" description="ACP-binding" evidence="1">
    <location>
        <begin position="245"/>
        <end position="249"/>
    </location>
</feature>
<feature type="active site" evidence="1">
    <location>
        <position position="112"/>
    </location>
</feature>
<feature type="active site" evidence="1">
    <location>
        <position position="244"/>
    </location>
</feature>
<feature type="active site" evidence="1">
    <location>
        <position position="274"/>
    </location>
</feature>
<comment type="function">
    <text evidence="1">Catalyzes the condensation reaction of fatty acid synthesis by the addition to an acyl acceptor of two carbons from malonyl-ACP. Catalyzes the first condensation reaction which initiates fatty acid synthesis and may therefore play a role in governing the total rate of fatty acid production. Possesses both acetoacetyl-ACP synthase and acetyl transacylase activities. Its substrate specificity determines the biosynthesis of branched-chain and/or straight-chain of fatty acids.</text>
</comment>
<comment type="catalytic activity">
    <reaction evidence="1">
        <text>malonyl-[ACP] + acetyl-CoA + H(+) = 3-oxobutanoyl-[ACP] + CO2 + CoA</text>
        <dbReference type="Rhea" id="RHEA:12080"/>
        <dbReference type="Rhea" id="RHEA-COMP:9623"/>
        <dbReference type="Rhea" id="RHEA-COMP:9625"/>
        <dbReference type="ChEBI" id="CHEBI:15378"/>
        <dbReference type="ChEBI" id="CHEBI:16526"/>
        <dbReference type="ChEBI" id="CHEBI:57287"/>
        <dbReference type="ChEBI" id="CHEBI:57288"/>
        <dbReference type="ChEBI" id="CHEBI:78449"/>
        <dbReference type="ChEBI" id="CHEBI:78450"/>
        <dbReference type="EC" id="2.3.1.180"/>
    </reaction>
</comment>
<comment type="pathway">
    <text evidence="1">Lipid metabolism; fatty acid biosynthesis.</text>
</comment>
<comment type="subunit">
    <text evidence="1">Homodimer.</text>
</comment>
<comment type="subcellular location">
    <subcellularLocation>
        <location evidence="1">Cytoplasm</location>
    </subcellularLocation>
</comment>
<comment type="domain">
    <text evidence="1">The last Arg residue of the ACP-binding site is essential for the weak association between ACP/AcpP and FabH.</text>
</comment>
<comment type="similarity">
    <text evidence="1">Belongs to the thiolase-like superfamily. FabH family.</text>
</comment>
<proteinExistence type="inferred from homology"/>
<protein>
    <recommendedName>
        <fullName evidence="1">Beta-ketoacyl-[acyl-carrier-protein] synthase III</fullName>
        <shortName evidence="1">Beta-ketoacyl-ACP synthase III</shortName>
        <shortName evidence="1">KAS III</shortName>
        <ecNumber evidence="1">2.3.1.180</ecNumber>
    </recommendedName>
    <alternativeName>
        <fullName evidence="1">3-oxoacyl-[acyl-carrier-protein] synthase 3</fullName>
    </alternativeName>
    <alternativeName>
        <fullName evidence="1">3-oxoacyl-[acyl-carrier-protein] synthase III</fullName>
    </alternativeName>
</protein>
<sequence>MYTKIIGTGSYLPEQVRTNADLEKMVDTSDEWIVTRTGIRERHIAAPNETVSTMGFEAATRAIEMAGIEKDQIGLIVVATTSATHAFPSAACQIQSMLDIKGCPAFDVAAACAGFTYALSVADQYVKSGAVKYALVVGSDVLARTCDPTDRGTIIIFGDGAGAAVLAASEEPGIISTHLHADGSYGELLTLPNADRVNPENSIHLTMAGNEVFKVAVTELAHIVDETLAANNLDRSQLDWLVPHQANLRIISATAKKLGMSMDNVVVTLDRHGNTSAASVPCALDEAVRDGRIKPGQLVLLEAFGGGFTWGSALVRF</sequence>
<evidence type="ECO:0000255" key="1">
    <source>
        <dbReference type="HAMAP-Rule" id="MF_01815"/>
    </source>
</evidence>
<reference key="1">
    <citation type="journal article" date="2005" name="Nucleic Acids Res.">
        <title>Genome dynamics and diversity of Shigella species, the etiologic agents of bacillary dysentery.</title>
        <authorList>
            <person name="Yang F."/>
            <person name="Yang J."/>
            <person name="Zhang X."/>
            <person name="Chen L."/>
            <person name="Jiang Y."/>
            <person name="Yan Y."/>
            <person name="Tang X."/>
            <person name="Wang J."/>
            <person name="Xiong Z."/>
            <person name="Dong J."/>
            <person name="Xue Y."/>
            <person name="Zhu Y."/>
            <person name="Xu X."/>
            <person name="Sun L."/>
            <person name="Chen S."/>
            <person name="Nie H."/>
            <person name="Peng J."/>
            <person name="Xu J."/>
            <person name="Wang Y."/>
            <person name="Yuan Z."/>
            <person name="Wen Y."/>
            <person name="Yao Z."/>
            <person name="Shen Y."/>
            <person name="Qiang B."/>
            <person name="Hou Y."/>
            <person name="Yu J."/>
            <person name="Jin Q."/>
        </authorList>
    </citation>
    <scope>NUCLEOTIDE SEQUENCE [LARGE SCALE GENOMIC DNA]</scope>
    <source>
        <strain>Sb227</strain>
    </source>
</reference>
<name>FABH_SHIBS</name>
<accession>Q31ZE6</accession>
<dbReference type="EC" id="2.3.1.180" evidence="1"/>
<dbReference type="EMBL" id="CP000036">
    <property type="protein sequence ID" value="ABB66562.1"/>
    <property type="molecule type" value="Genomic_DNA"/>
</dbReference>
<dbReference type="RefSeq" id="WP_000288128.1">
    <property type="nucleotide sequence ID" value="NC_007613.1"/>
</dbReference>
<dbReference type="SMR" id="Q31ZE6"/>
<dbReference type="KEGG" id="sbo:SBO_1972"/>
<dbReference type="HOGENOM" id="CLU_039592_4_1_6"/>
<dbReference type="UniPathway" id="UPA00094"/>
<dbReference type="Proteomes" id="UP000007067">
    <property type="component" value="Chromosome"/>
</dbReference>
<dbReference type="GO" id="GO:0005737">
    <property type="term" value="C:cytoplasm"/>
    <property type="evidence" value="ECO:0007669"/>
    <property type="project" value="UniProtKB-SubCell"/>
</dbReference>
<dbReference type="GO" id="GO:0004315">
    <property type="term" value="F:3-oxoacyl-[acyl-carrier-protein] synthase activity"/>
    <property type="evidence" value="ECO:0007669"/>
    <property type="project" value="InterPro"/>
</dbReference>
<dbReference type="GO" id="GO:0033818">
    <property type="term" value="F:beta-ketoacyl-acyl-carrier-protein synthase III activity"/>
    <property type="evidence" value="ECO:0007669"/>
    <property type="project" value="UniProtKB-UniRule"/>
</dbReference>
<dbReference type="GO" id="GO:0006633">
    <property type="term" value="P:fatty acid biosynthetic process"/>
    <property type="evidence" value="ECO:0007669"/>
    <property type="project" value="UniProtKB-UniRule"/>
</dbReference>
<dbReference type="CDD" id="cd00830">
    <property type="entry name" value="KAS_III"/>
    <property type="match status" value="1"/>
</dbReference>
<dbReference type="FunFam" id="3.40.47.10:FF:000004">
    <property type="entry name" value="3-oxoacyl-[acyl-carrier-protein] synthase 3"/>
    <property type="match status" value="1"/>
</dbReference>
<dbReference type="Gene3D" id="3.40.47.10">
    <property type="match status" value="1"/>
</dbReference>
<dbReference type="HAMAP" id="MF_01815">
    <property type="entry name" value="FabH"/>
    <property type="match status" value="1"/>
</dbReference>
<dbReference type="InterPro" id="IPR013747">
    <property type="entry name" value="ACP_syn_III_C"/>
</dbReference>
<dbReference type="InterPro" id="IPR013751">
    <property type="entry name" value="ACP_syn_III_N"/>
</dbReference>
<dbReference type="InterPro" id="IPR004655">
    <property type="entry name" value="FabH"/>
</dbReference>
<dbReference type="InterPro" id="IPR016039">
    <property type="entry name" value="Thiolase-like"/>
</dbReference>
<dbReference type="NCBIfam" id="TIGR00747">
    <property type="entry name" value="fabH"/>
    <property type="match status" value="1"/>
</dbReference>
<dbReference type="NCBIfam" id="NF006829">
    <property type="entry name" value="PRK09352.1"/>
    <property type="match status" value="1"/>
</dbReference>
<dbReference type="PANTHER" id="PTHR43091">
    <property type="entry name" value="3-OXOACYL-[ACYL-CARRIER-PROTEIN] SYNTHASE"/>
    <property type="match status" value="1"/>
</dbReference>
<dbReference type="PANTHER" id="PTHR43091:SF1">
    <property type="entry name" value="BETA-KETOACYL-[ACYL-CARRIER-PROTEIN] SYNTHASE III, CHLOROPLASTIC"/>
    <property type="match status" value="1"/>
</dbReference>
<dbReference type="Pfam" id="PF08545">
    <property type="entry name" value="ACP_syn_III"/>
    <property type="match status" value="1"/>
</dbReference>
<dbReference type="Pfam" id="PF08541">
    <property type="entry name" value="ACP_syn_III_C"/>
    <property type="match status" value="1"/>
</dbReference>
<dbReference type="SUPFAM" id="SSF53901">
    <property type="entry name" value="Thiolase-like"/>
    <property type="match status" value="1"/>
</dbReference>
<organism>
    <name type="scientific">Shigella boydii serotype 4 (strain Sb227)</name>
    <dbReference type="NCBI Taxonomy" id="300268"/>
    <lineage>
        <taxon>Bacteria</taxon>
        <taxon>Pseudomonadati</taxon>
        <taxon>Pseudomonadota</taxon>
        <taxon>Gammaproteobacteria</taxon>
        <taxon>Enterobacterales</taxon>
        <taxon>Enterobacteriaceae</taxon>
        <taxon>Shigella</taxon>
    </lineage>
</organism>
<gene>
    <name evidence="1" type="primary">fabH</name>
    <name type="ordered locus">SBO_1972</name>
</gene>